<proteinExistence type="inferred from homology"/>
<gene>
    <name type="primary">gmhB</name>
    <name type="ordered locus">PA0006</name>
</gene>
<feature type="chain" id="PRO_0000209403" description="D-glycero-beta-D-manno-heptose-1,7-bisphosphate 7-phosphatase">
    <location>
        <begin position="1"/>
        <end position="178"/>
    </location>
</feature>
<feature type="active site" description="Nucleophile" evidence="1">
    <location>
        <position position="9"/>
    </location>
</feature>
<feature type="active site" description="Proton donor" evidence="1">
    <location>
        <position position="11"/>
    </location>
</feature>
<feature type="binding site" evidence="1">
    <location>
        <begin position="9"/>
        <end position="11"/>
    </location>
    <ligand>
        <name>substrate</name>
    </ligand>
</feature>
<feature type="binding site" evidence="1">
    <location>
        <position position="9"/>
    </location>
    <ligand>
        <name>Mg(2+)</name>
        <dbReference type="ChEBI" id="CHEBI:18420"/>
    </ligand>
</feature>
<feature type="binding site" evidence="1">
    <location>
        <position position="11"/>
    </location>
    <ligand>
        <name>Mg(2+)</name>
        <dbReference type="ChEBI" id="CHEBI:18420"/>
    </ligand>
</feature>
<feature type="binding site" evidence="1">
    <location>
        <begin position="17"/>
        <end position="21"/>
    </location>
    <ligand>
        <name>substrate</name>
    </ligand>
</feature>
<feature type="binding site" evidence="1">
    <location>
        <begin position="52"/>
        <end position="55"/>
    </location>
    <ligand>
        <name>substrate</name>
    </ligand>
</feature>
<feature type="binding site" evidence="2">
    <location>
        <position position="91"/>
    </location>
    <ligand>
        <name>Zn(2+)</name>
        <dbReference type="ChEBI" id="CHEBI:29105"/>
    </ligand>
</feature>
<feature type="binding site" evidence="2">
    <location>
        <position position="93"/>
    </location>
    <ligand>
        <name>Zn(2+)</name>
        <dbReference type="ChEBI" id="CHEBI:29105"/>
    </ligand>
</feature>
<feature type="binding site" evidence="2">
    <location>
        <position position="99"/>
    </location>
    <ligand>
        <name>Zn(2+)</name>
        <dbReference type="ChEBI" id="CHEBI:29105"/>
    </ligand>
</feature>
<feature type="binding site" evidence="2">
    <location>
        <position position="101"/>
    </location>
    <ligand>
        <name>Zn(2+)</name>
        <dbReference type="ChEBI" id="CHEBI:29105"/>
    </ligand>
</feature>
<feature type="binding site" evidence="1">
    <location>
        <begin position="102"/>
        <end position="103"/>
    </location>
    <ligand>
        <name>substrate</name>
    </ligand>
</feature>
<feature type="binding site" evidence="1">
    <location>
        <position position="128"/>
    </location>
    <ligand>
        <name>Mg(2+)</name>
        <dbReference type="ChEBI" id="CHEBI:18420"/>
    </ligand>
</feature>
<feature type="site" description="Stabilizes the phosphoryl group" evidence="1">
    <location>
        <position position="52"/>
    </location>
</feature>
<feature type="site" description="Contributes to substrate recognition" evidence="1">
    <location>
        <position position="102"/>
    </location>
</feature>
<feature type="site" description="Stabilizes the phosphoryl group" evidence="1">
    <location>
        <position position="103"/>
    </location>
</feature>
<accession>Q9I7C0</accession>
<protein>
    <recommendedName>
        <fullName>D-glycero-beta-D-manno-heptose-1,7-bisphosphate 7-phosphatase</fullName>
        <ecNumber>3.1.3.82</ecNumber>
    </recommendedName>
    <alternativeName>
        <fullName>D,D-heptose 1,7-bisphosphate phosphatase</fullName>
        <shortName>HBP phosphatase</shortName>
    </alternativeName>
</protein>
<dbReference type="EC" id="3.1.3.82"/>
<dbReference type="EMBL" id="AE004091">
    <property type="protein sequence ID" value="AAG03396.1"/>
    <property type="molecule type" value="Genomic_DNA"/>
</dbReference>
<dbReference type="PIR" id="B83645">
    <property type="entry name" value="B83645"/>
</dbReference>
<dbReference type="RefSeq" id="NP_064726.1">
    <property type="nucleotide sequence ID" value="NC_002516.2"/>
</dbReference>
<dbReference type="RefSeq" id="WP_003120688.1">
    <property type="nucleotide sequence ID" value="NZ_QZGE01000012.1"/>
</dbReference>
<dbReference type="SMR" id="Q9I7C0"/>
<dbReference type="FunCoup" id="Q9I7C0">
    <property type="interactions" value="259"/>
</dbReference>
<dbReference type="STRING" id="208964.PA0006"/>
<dbReference type="PaxDb" id="208964-PA0006"/>
<dbReference type="DNASU" id="879245"/>
<dbReference type="GeneID" id="879245"/>
<dbReference type="KEGG" id="pae:PA0006"/>
<dbReference type="PATRIC" id="fig|208964.12.peg.6"/>
<dbReference type="PseudoCAP" id="PA0006"/>
<dbReference type="HOGENOM" id="CLU_085077_2_0_6"/>
<dbReference type="InParanoid" id="Q9I7C0"/>
<dbReference type="OrthoDB" id="9781367at2"/>
<dbReference type="PhylomeDB" id="Q9I7C0"/>
<dbReference type="BioCyc" id="PAER208964:G1FZ6-6-MONOMER"/>
<dbReference type="BRENDA" id="3.1.3.82">
    <property type="organism ID" value="5087"/>
</dbReference>
<dbReference type="UniPathway" id="UPA00356">
    <property type="reaction ID" value="UER00438"/>
</dbReference>
<dbReference type="UniPathway" id="UPA00958"/>
<dbReference type="Proteomes" id="UP000002438">
    <property type="component" value="Chromosome"/>
</dbReference>
<dbReference type="GO" id="GO:0005737">
    <property type="term" value="C:cytoplasm"/>
    <property type="evidence" value="ECO:0007669"/>
    <property type="project" value="UniProtKB-SubCell"/>
</dbReference>
<dbReference type="GO" id="GO:0034200">
    <property type="term" value="F:D-glycero-beta-D-manno-heptose 1,7-bisphosphate 7-phosphatase activity"/>
    <property type="evidence" value="ECO:0000250"/>
    <property type="project" value="UniProtKB"/>
</dbReference>
<dbReference type="GO" id="GO:0000287">
    <property type="term" value="F:magnesium ion binding"/>
    <property type="evidence" value="ECO:0000250"/>
    <property type="project" value="UniProtKB"/>
</dbReference>
<dbReference type="GO" id="GO:0008270">
    <property type="term" value="F:zinc ion binding"/>
    <property type="evidence" value="ECO:0000250"/>
    <property type="project" value="UniProtKB"/>
</dbReference>
<dbReference type="GO" id="GO:0097171">
    <property type="term" value="P:ADP-L-glycero-beta-D-manno-heptose biosynthetic process"/>
    <property type="evidence" value="ECO:0007669"/>
    <property type="project" value="UniProtKB-UniPathway"/>
</dbReference>
<dbReference type="GO" id="GO:0009244">
    <property type="term" value="P:lipopolysaccharide core region biosynthetic process"/>
    <property type="evidence" value="ECO:0007669"/>
    <property type="project" value="UniProtKB-UniPathway"/>
</dbReference>
<dbReference type="CDD" id="cd07503">
    <property type="entry name" value="HAD_HisB-N"/>
    <property type="match status" value="1"/>
</dbReference>
<dbReference type="FunFam" id="3.40.50.1000:FF:000168">
    <property type="entry name" value="D,D-heptose 1,7-bisphosphate phosphatase"/>
    <property type="match status" value="1"/>
</dbReference>
<dbReference type="Gene3D" id="3.40.50.1000">
    <property type="entry name" value="HAD superfamily/HAD-like"/>
    <property type="match status" value="1"/>
</dbReference>
<dbReference type="InterPro" id="IPR036412">
    <property type="entry name" value="HAD-like_sf"/>
</dbReference>
<dbReference type="InterPro" id="IPR006549">
    <property type="entry name" value="HAD-SF_hydro_IIIA"/>
</dbReference>
<dbReference type="InterPro" id="IPR023214">
    <property type="entry name" value="HAD_sf"/>
</dbReference>
<dbReference type="InterPro" id="IPR004446">
    <property type="entry name" value="Heptose_bisP_phosphatase"/>
</dbReference>
<dbReference type="InterPro" id="IPR006543">
    <property type="entry name" value="Histidinol-phos"/>
</dbReference>
<dbReference type="NCBIfam" id="TIGR01662">
    <property type="entry name" value="HAD-SF-IIIA"/>
    <property type="match status" value="1"/>
</dbReference>
<dbReference type="NCBIfam" id="TIGR01656">
    <property type="entry name" value="Histidinol-ppas"/>
    <property type="match status" value="1"/>
</dbReference>
<dbReference type="NCBIfam" id="NF006506">
    <property type="entry name" value="PRK08942.1"/>
    <property type="match status" value="1"/>
</dbReference>
<dbReference type="PANTHER" id="PTHR42891">
    <property type="entry name" value="D-GLYCERO-BETA-D-MANNO-HEPTOSE-1,7-BISPHOSPHATE 7-PHOSPHATASE"/>
    <property type="match status" value="1"/>
</dbReference>
<dbReference type="PANTHER" id="PTHR42891:SF1">
    <property type="entry name" value="D-GLYCERO-BETA-D-MANNO-HEPTOSE-1,7-BISPHOSPHATE 7-PHOSPHATASE"/>
    <property type="match status" value="1"/>
</dbReference>
<dbReference type="Pfam" id="PF13242">
    <property type="entry name" value="Hydrolase_like"/>
    <property type="match status" value="1"/>
</dbReference>
<dbReference type="PIRSF" id="PIRSF004682">
    <property type="entry name" value="GmhB"/>
    <property type="match status" value="1"/>
</dbReference>
<dbReference type="SUPFAM" id="SSF56784">
    <property type="entry name" value="HAD-like"/>
    <property type="match status" value="1"/>
</dbReference>
<name>GMHBB_PSEAE</name>
<keyword id="KW-0119">Carbohydrate metabolism</keyword>
<keyword id="KW-0963">Cytoplasm</keyword>
<keyword id="KW-0378">Hydrolase</keyword>
<keyword id="KW-0448">Lipopolysaccharide biosynthesis</keyword>
<keyword id="KW-0460">Magnesium</keyword>
<keyword id="KW-0479">Metal-binding</keyword>
<keyword id="KW-1185">Reference proteome</keyword>
<keyword id="KW-0862">Zinc</keyword>
<evidence type="ECO:0000250" key="1"/>
<evidence type="ECO:0000250" key="2">
    <source>
        <dbReference type="UniProtKB" id="Q7WG29"/>
    </source>
</evidence>
<evidence type="ECO:0000305" key="3"/>
<sequence>MSRSLLILDRDGVINLDSDDYIKTLDEWIPIPSSIEAIARLSQAGWTVAVATNQSGIARGYYDLAVLEAMHARLRELVAEQGGEVGLIVYCPHGPDDGCDCRKPKPGMLRQIGEHYGVDLSGIWFVGDSIGDLEAARAVDCQPVLVKTGKGVRTLGKPLPEGTLIFDDLAAVASALLQ</sequence>
<comment type="function">
    <text evidence="1">Converts the D-glycero-beta-D-manno-heptose 1,7-bisphosphate intermediate into D-glycero-beta-D-manno-heptose 1-phosphate by removing the phosphate group at the C-7 position.</text>
</comment>
<comment type="catalytic activity">
    <reaction>
        <text>D-glycero-beta-D-manno-heptose 1,7-bisphosphate + H2O = D-glycero-beta-D-manno-heptose 1-phosphate + phosphate</text>
        <dbReference type="Rhea" id="RHEA:28518"/>
        <dbReference type="ChEBI" id="CHEBI:15377"/>
        <dbReference type="ChEBI" id="CHEBI:43474"/>
        <dbReference type="ChEBI" id="CHEBI:60208"/>
        <dbReference type="ChEBI" id="CHEBI:61593"/>
        <dbReference type="EC" id="3.1.3.82"/>
    </reaction>
</comment>
<comment type="cofactor">
    <cofactor evidence="1">
        <name>Mg(2+)</name>
        <dbReference type="ChEBI" id="CHEBI:18420"/>
    </cofactor>
</comment>
<comment type="cofactor">
    <cofactor evidence="1">
        <name>Zn(2+)</name>
        <dbReference type="ChEBI" id="CHEBI:29105"/>
    </cofactor>
</comment>
<comment type="pathway">
    <text>Nucleotide-sugar biosynthesis; ADP-L-glycero-beta-D-manno-heptose biosynthesis; ADP-L-glycero-beta-D-manno-heptose from D-glycero-beta-D-manno-heptose 7-phosphate: step 2/4.</text>
</comment>
<comment type="pathway">
    <text>Bacterial outer membrane biogenesis; LPS core biosynthesis.</text>
</comment>
<comment type="subunit">
    <text evidence="1">Monomer.</text>
</comment>
<comment type="subcellular location">
    <subcellularLocation>
        <location evidence="1">Cytoplasm</location>
    </subcellularLocation>
</comment>
<comment type="similarity">
    <text evidence="3">Belongs to the GmhB family.</text>
</comment>
<reference key="1">
    <citation type="journal article" date="2000" name="Nature">
        <title>Complete genome sequence of Pseudomonas aeruginosa PAO1, an opportunistic pathogen.</title>
        <authorList>
            <person name="Stover C.K."/>
            <person name="Pham X.-Q.T."/>
            <person name="Erwin A.L."/>
            <person name="Mizoguchi S.D."/>
            <person name="Warrener P."/>
            <person name="Hickey M.J."/>
            <person name="Brinkman F.S.L."/>
            <person name="Hufnagle W.O."/>
            <person name="Kowalik D.J."/>
            <person name="Lagrou M."/>
            <person name="Garber R.L."/>
            <person name="Goltry L."/>
            <person name="Tolentino E."/>
            <person name="Westbrock-Wadman S."/>
            <person name="Yuan Y."/>
            <person name="Brody L.L."/>
            <person name="Coulter S.N."/>
            <person name="Folger K.R."/>
            <person name="Kas A."/>
            <person name="Larbig K."/>
            <person name="Lim R.M."/>
            <person name="Smith K.A."/>
            <person name="Spencer D.H."/>
            <person name="Wong G.K.-S."/>
            <person name="Wu Z."/>
            <person name="Paulsen I.T."/>
            <person name="Reizer J."/>
            <person name="Saier M.H. Jr."/>
            <person name="Hancock R.E.W."/>
            <person name="Lory S."/>
            <person name="Olson M.V."/>
        </authorList>
    </citation>
    <scope>NUCLEOTIDE SEQUENCE [LARGE SCALE GENOMIC DNA]</scope>
    <source>
        <strain>ATCC 15692 / DSM 22644 / CIP 104116 / JCM 14847 / LMG 12228 / 1C / PRS 101 / PAO1</strain>
    </source>
</reference>
<reference key="2">
    <citation type="journal article" date="2002" name="Microbiology">
        <title>Novel pathways for biosynthesis of nucleotide-activated glycero-manno-heptose precursors of bacterial glycoproteins and cell surface polysaccharides.</title>
        <authorList>
            <person name="Valvano M.A."/>
            <person name="Messner P."/>
            <person name="Kosma P."/>
        </authorList>
    </citation>
    <scope>BIOSYNTHESIS OF NUCLEOTIDE-ACTIVATED GLYCERO-MANNO-HEPTOSE</scope>
</reference>
<organism>
    <name type="scientific">Pseudomonas aeruginosa (strain ATCC 15692 / DSM 22644 / CIP 104116 / JCM 14847 / LMG 12228 / 1C / PRS 101 / PAO1)</name>
    <dbReference type="NCBI Taxonomy" id="208964"/>
    <lineage>
        <taxon>Bacteria</taxon>
        <taxon>Pseudomonadati</taxon>
        <taxon>Pseudomonadota</taxon>
        <taxon>Gammaproteobacteria</taxon>
        <taxon>Pseudomonadales</taxon>
        <taxon>Pseudomonadaceae</taxon>
        <taxon>Pseudomonas</taxon>
    </lineage>
</organism>